<dbReference type="EC" id="4.2.1.113" evidence="1"/>
<dbReference type="EMBL" id="CP000325">
    <property type="protein sequence ID" value="ABL03316.1"/>
    <property type="molecule type" value="Genomic_DNA"/>
</dbReference>
<dbReference type="RefSeq" id="WP_011738941.1">
    <property type="nucleotide sequence ID" value="NC_008611.1"/>
</dbReference>
<dbReference type="SMR" id="A0PLU7"/>
<dbReference type="GeneID" id="93438732"/>
<dbReference type="KEGG" id="mul:MUL_0652"/>
<dbReference type="eggNOG" id="COG4948">
    <property type="taxonomic scope" value="Bacteria"/>
</dbReference>
<dbReference type="HOGENOM" id="CLU_057696_0_0_11"/>
<dbReference type="UniPathway" id="UPA00079"/>
<dbReference type="UniPathway" id="UPA01057">
    <property type="reaction ID" value="UER00165"/>
</dbReference>
<dbReference type="Proteomes" id="UP000000765">
    <property type="component" value="Chromosome"/>
</dbReference>
<dbReference type="GO" id="GO:0000287">
    <property type="term" value="F:magnesium ion binding"/>
    <property type="evidence" value="ECO:0007669"/>
    <property type="project" value="UniProtKB-UniRule"/>
</dbReference>
<dbReference type="GO" id="GO:0043748">
    <property type="term" value="F:O-succinylbenzoate synthase activity"/>
    <property type="evidence" value="ECO:0007669"/>
    <property type="project" value="UniProtKB-EC"/>
</dbReference>
<dbReference type="GO" id="GO:0009234">
    <property type="term" value="P:menaquinone biosynthetic process"/>
    <property type="evidence" value="ECO:0007669"/>
    <property type="project" value="UniProtKB-UniRule"/>
</dbReference>
<dbReference type="CDD" id="cd03320">
    <property type="entry name" value="OSBS"/>
    <property type="match status" value="1"/>
</dbReference>
<dbReference type="Gene3D" id="3.20.20.120">
    <property type="entry name" value="Enolase-like C-terminal domain"/>
    <property type="match status" value="1"/>
</dbReference>
<dbReference type="HAMAP" id="MF_00470">
    <property type="entry name" value="MenC_1"/>
    <property type="match status" value="1"/>
</dbReference>
<dbReference type="InterPro" id="IPR036849">
    <property type="entry name" value="Enolase-like_C_sf"/>
</dbReference>
<dbReference type="InterPro" id="IPR029065">
    <property type="entry name" value="Enolase_C-like"/>
</dbReference>
<dbReference type="InterPro" id="IPR013342">
    <property type="entry name" value="Mandelate_racemase_C"/>
</dbReference>
<dbReference type="InterPro" id="IPR010196">
    <property type="entry name" value="OSB_synthase_MenC1"/>
</dbReference>
<dbReference type="NCBIfam" id="NF002782">
    <property type="entry name" value="PRK02901.1"/>
    <property type="match status" value="1"/>
</dbReference>
<dbReference type="PANTHER" id="PTHR48073:SF2">
    <property type="entry name" value="O-SUCCINYLBENZOATE SYNTHASE"/>
    <property type="match status" value="1"/>
</dbReference>
<dbReference type="PANTHER" id="PTHR48073">
    <property type="entry name" value="O-SUCCINYLBENZOATE SYNTHASE-RELATED"/>
    <property type="match status" value="1"/>
</dbReference>
<dbReference type="Pfam" id="PF18374">
    <property type="entry name" value="Enolase_like_N"/>
    <property type="match status" value="1"/>
</dbReference>
<dbReference type="Pfam" id="PF13378">
    <property type="entry name" value="MR_MLE_C"/>
    <property type="match status" value="1"/>
</dbReference>
<dbReference type="SFLD" id="SFLDS00001">
    <property type="entry name" value="Enolase"/>
    <property type="match status" value="1"/>
</dbReference>
<dbReference type="SFLD" id="SFLDF00009">
    <property type="entry name" value="o-succinylbenzoate_synthase"/>
    <property type="match status" value="1"/>
</dbReference>
<dbReference type="SMART" id="SM00922">
    <property type="entry name" value="MR_MLE"/>
    <property type="match status" value="1"/>
</dbReference>
<dbReference type="SUPFAM" id="SSF51604">
    <property type="entry name" value="Enolase C-terminal domain-like"/>
    <property type="match status" value="1"/>
</dbReference>
<protein>
    <recommendedName>
        <fullName evidence="1">o-succinylbenzoate synthase</fullName>
        <shortName evidence="1">OSB synthase</shortName>
        <shortName evidence="1">OSBS</shortName>
        <ecNumber evidence="1">4.2.1.113</ecNumber>
    </recommendedName>
    <alternativeName>
        <fullName evidence="1">4-(2'-carboxyphenyl)-4-oxybutyric acid synthase</fullName>
    </alternativeName>
    <alternativeName>
        <fullName evidence="1">o-succinylbenzoic acid synthase</fullName>
    </alternativeName>
</protein>
<proteinExistence type="inferred from homology"/>
<evidence type="ECO:0000255" key="1">
    <source>
        <dbReference type="HAMAP-Rule" id="MF_00470"/>
    </source>
</evidence>
<reference key="1">
    <citation type="journal article" date="2007" name="Genome Res.">
        <title>Reductive evolution and niche adaptation inferred from the genome of Mycobacterium ulcerans, the causative agent of Buruli ulcer.</title>
        <authorList>
            <person name="Stinear T.P."/>
            <person name="Seemann T."/>
            <person name="Pidot S."/>
            <person name="Frigui W."/>
            <person name="Reysset G."/>
            <person name="Garnier T."/>
            <person name="Meurice G."/>
            <person name="Simon D."/>
            <person name="Bouchier C."/>
            <person name="Ma L."/>
            <person name="Tichit M."/>
            <person name="Porter J.L."/>
            <person name="Ryan J."/>
            <person name="Johnson P.D.R."/>
            <person name="Davies J.K."/>
            <person name="Jenkin G.A."/>
            <person name="Small P.L.C."/>
            <person name="Jones L.M."/>
            <person name="Tekaia F."/>
            <person name="Laval F."/>
            <person name="Daffe M."/>
            <person name="Parkhill J."/>
            <person name="Cole S.T."/>
        </authorList>
    </citation>
    <scope>NUCLEOTIDE SEQUENCE [LARGE SCALE GENOMIC DNA]</scope>
    <source>
        <strain>Agy99</strain>
    </source>
</reference>
<name>MENC_MYCUA</name>
<keyword id="KW-0456">Lyase</keyword>
<keyword id="KW-0460">Magnesium</keyword>
<keyword id="KW-0474">Menaquinone biosynthesis</keyword>
<keyword id="KW-0479">Metal-binding</keyword>
<organism>
    <name type="scientific">Mycobacterium ulcerans (strain Agy99)</name>
    <dbReference type="NCBI Taxonomy" id="362242"/>
    <lineage>
        <taxon>Bacteria</taxon>
        <taxon>Bacillati</taxon>
        <taxon>Actinomycetota</taxon>
        <taxon>Actinomycetes</taxon>
        <taxon>Mycobacteriales</taxon>
        <taxon>Mycobacteriaceae</taxon>
        <taxon>Mycobacterium</taxon>
        <taxon>Mycobacterium ulcerans group</taxon>
    </lineage>
</organism>
<comment type="function">
    <text evidence="1">Converts 2-succinyl-6-hydroxy-2,4-cyclohexadiene-1-carboxylate (SHCHC) to 2-succinylbenzoate (OSB).</text>
</comment>
<comment type="catalytic activity">
    <reaction evidence="1">
        <text>(1R,6R)-6-hydroxy-2-succinyl-cyclohexa-2,4-diene-1-carboxylate = 2-succinylbenzoate + H2O</text>
        <dbReference type="Rhea" id="RHEA:10196"/>
        <dbReference type="ChEBI" id="CHEBI:15377"/>
        <dbReference type="ChEBI" id="CHEBI:18325"/>
        <dbReference type="ChEBI" id="CHEBI:58689"/>
        <dbReference type="EC" id="4.2.1.113"/>
    </reaction>
</comment>
<comment type="cofactor">
    <cofactor evidence="1">
        <name>a divalent metal cation</name>
        <dbReference type="ChEBI" id="CHEBI:60240"/>
    </cofactor>
</comment>
<comment type="pathway">
    <text evidence="1">Quinol/quinone metabolism; 1,4-dihydroxy-2-naphthoate biosynthesis; 1,4-dihydroxy-2-naphthoate from chorismate: step 4/7.</text>
</comment>
<comment type="pathway">
    <text evidence="1">Quinol/quinone metabolism; menaquinone biosynthesis.</text>
</comment>
<comment type="similarity">
    <text evidence="1">Belongs to the mandelate racemase/muconate lactonizing enzyme family. MenC type 1 subfamily.</text>
</comment>
<feature type="chain" id="PRO_1000013807" description="o-succinylbenzoate synthase">
    <location>
        <begin position="1"/>
        <end position="327"/>
    </location>
</feature>
<feature type="active site" description="Proton donor" evidence="1">
    <location>
        <position position="110"/>
    </location>
</feature>
<feature type="active site" description="Proton acceptor" evidence="1">
    <location>
        <position position="212"/>
    </location>
</feature>
<feature type="binding site" evidence="1">
    <location>
        <position position="138"/>
    </location>
    <ligand>
        <name>Mg(2+)</name>
        <dbReference type="ChEBI" id="CHEBI:18420"/>
    </ligand>
</feature>
<feature type="binding site" evidence="1">
    <location>
        <position position="165"/>
    </location>
    <ligand>
        <name>Mg(2+)</name>
        <dbReference type="ChEBI" id="CHEBI:18420"/>
    </ligand>
</feature>
<feature type="binding site" evidence="1">
    <location>
        <position position="188"/>
    </location>
    <ligand>
        <name>Mg(2+)</name>
        <dbReference type="ChEBI" id="CHEBI:18420"/>
    </ligand>
</feature>
<gene>
    <name evidence="1" type="primary">menC</name>
    <name type="ordered locus">MUL_0652</name>
</gene>
<sequence>MIPGPATLPDLLDRLQVVALPMRVRFRGITTREVALIEGPSGWGEFGAFLEYQPPEAAAWLASAIDAAYGQPPPVRRGRIPINATVPAVPPAQVPELLARFPGARTAKVKVAEPGQTLASDVERVNAVRALVPTVRVDANGGWSVDQAAQAAVALTADGPLEYLEQPCATVGELAELRRRIEVPIAADEAIRKAEDPLAVVRAGAADVAVLKVAPLGGVWALLDIAAQIDIPVVISSALDSAVGIAAGLSAAAALPQLQHACGLGTGGLFVEDVAEPAIPVDGALAPQRVAPDPARLRALGAAPDRRQWWIDRIKACYPLLYRRSGD</sequence>
<accession>A0PLU7</accession>